<evidence type="ECO:0000250" key="1"/>
<evidence type="ECO:0000255" key="2">
    <source>
        <dbReference type="PROSITE-ProRule" id="PRU10035"/>
    </source>
</evidence>
<evidence type="ECO:0000255" key="3">
    <source>
        <dbReference type="PROSITE-ProRule" id="PRU10036"/>
    </source>
</evidence>
<evidence type="ECO:0000269" key="4">
    <source>
    </source>
</evidence>
<evidence type="ECO:0000269" key="5">
    <source>
    </source>
</evidence>
<evidence type="ECO:0000269" key="6">
    <source>
    </source>
</evidence>
<evidence type="ECO:0000305" key="7"/>
<sequence length="118" mass="13302">NLYQFKNMIHCTVPSRPWWHFADYGCYCGRGGKGTPVDDLDRCCQVHDNCYEKAGKMGCWPYFTLYKYKCSQGKLTCSGGNSKCGAAVCNCDLVAANCFAGARYIDANYNINFKKRCQ</sequence>
<organism>
    <name type="scientific">Naja mossambica</name>
    <name type="common">Mozambique spitting cobra</name>
    <dbReference type="NCBI Taxonomy" id="8644"/>
    <lineage>
        <taxon>Eukaryota</taxon>
        <taxon>Metazoa</taxon>
        <taxon>Chordata</taxon>
        <taxon>Craniata</taxon>
        <taxon>Vertebrata</taxon>
        <taxon>Euteleostomi</taxon>
        <taxon>Lepidosauria</taxon>
        <taxon>Squamata</taxon>
        <taxon>Bifurcata</taxon>
        <taxon>Unidentata</taxon>
        <taxon>Episquamata</taxon>
        <taxon>Toxicofera</taxon>
        <taxon>Serpentes</taxon>
        <taxon>Colubroidea</taxon>
        <taxon>Elapidae</taxon>
        <taxon>Elapinae</taxon>
        <taxon>Naja</taxon>
    </lineage>
</organism>
<name>PA2B3_NAJMO</name>
<dbReference type="EC" id="3.1.1.4"/>
<dbReference type="PIR" id="A00744">
    <property type="entry name" value="PSNJ3M"/>
</dbReference>
<dbReference type="SMR" id="P00604"/>
<dbReference type="GO" id="GO:0005576">
    <property type="term" value="C:extracellular region"/>
    <property type="evidence" value="ECO:0007669"/>
    <property type="project" value="UniProtKB-SubCell"/>
</dbReference>
<dbReference type="GO" id="GO:0005509">
    <property type="term" value="F:calcium ion binding"/>
    <property type="evidence" value="ECO:0007669"/>
    <property type="project" value="InterPro"/>
</dbReference>
<dbReference type="GO" id="GO:0047498">
    <property type="term" value="F:calcium-dependent phospholipase A2 activity"/>
    <property type="evidence" value="ECO:0007669"/>
    <property type="project" value="TreeGrafter"/>
</dbReference>
<dbReference type="GO" id="GO:0005543">
    <property type="term" value="F:phospholipid binding"/>
    <property type="evidence" value="ECO:0007669"/>
    <property type="project" value="TreeGrafter"/>
</dbReference>
<dbReference type="GO" id="GO:0090729">
    <property type="term" value="F:toxin activity"/>
    <property type="evidence" value="ECO:0007669"/>
    <property type="project" value="UniProtKB-KW"/>
</dbReference>
<dbReference type="GO" id="GO:0050482">
    <property type="term" value="P:arachidonate secretion"/>
    <property type="evidence" value="ECO:0007669"/>
    <property type="project" value="InterPro"/>
</dbReference>
<dbReference type="GO" id="GO:0031640">
    <property type="term" value="P:killing of cells of another organism"/>
    <property type="evidence" value="ECO:0007669"/>
    <property type="project" value="UniProtKB-KW"/>
</dbReference>
<dbReference type="GO" id="GO:0016042">
    <property type="term" value="P:lipid catabolic process"/>
    <property type="evidence" value="ECO:0007669"/>
    <property type="project" value="UniProtKB-KW"/>
</dbReference>
<dbReference type="GO" id="GO:0006644">
    <property type="term" value="P:phospholipid metabolic process"/>
    <property type="evidence" value="ECO:0007669"/>
    <property type="project" value="InterPro"/>
</dbReference>
<dbReference type="CDD" id="cd00125">
    <property type="entry name" value="PLA2c"/>
    <property type="match status" value="1"/>
</dbReference>
<dbReference type="FunFam" id="1.20.90.10:FF:000007">
    <property type="entry name" value="Acidic phospholipase A2"/>
    <property type="match status" value="1"/>
</dbReference>
<dbReference type="Gene3D" id="1.20.90.10">
    <property type="entry name" value="Phospholipase A2 domain"/>
    <property type="match status" value="1"/>
</dbReference>
<dbReference type="InterPro" id="IPR001211">
    <property type="entry name" value="PLipase_A2"/>
</dbReference>
<dbReference type="InterPro" id="IPR033112">
    <property type="entry name" value="PLipase_A2_Asp_AS"/>
</dbReference>
<dbReference type="InterPro" id="IPR016090">
    <property type="entry name" value="PLipase_A2_dom"/>
</dbReference>
<dbReference type="InterPro" id="IPR036444">
    <property type="entry name" value="PLipase_A2_dom_sf"/>
</dbReference>
<dbReference type="InterPro" id="IPR033113">
    <property type="entry name" value="PLipase_A2_His_AS"/>
</dbReference>
<dbReference type="PANTHER" id="PTHR11716:SF106">
    <property type="entry name" value="PHOSPHOLIPASE A2 A2-ACTITOXIN-UCS2A-LIKE"/>
    <property type="match status" value="1"/>
</dbReference>
<dbReference type="PANTHER" id="PTHR11716">
    <property type="entry name" value="PHOSPHOLIPASE A2 FAMILY MEMBER"/>
    <property type="match status" value="1"/>
</dbReference>
<dbReference type="Pfam" id="PF00068">
    <property type="entry name" value="Phospholip_A2_1"/>
    <property type="match status" value="1"/>
</dbReference>
<dbReference type="PRINTS" id="PR00389">
    <property type="entry name" value="PHPHLIPASEA2"/>
</dbReference>
<dbReference type="SMART" id="SM00085">
    <property type="entry name" value="PA2c"/>
    <property type="match status" value="1"/>
</dbReference>
<dbReference type="SUPFAM" id="SSF48619">
    <property type="entry name" value="Phospholipase A2, PLA2"/>
    <property type="match status" value="1"/>
</dbReference>
<dbReference type="PROSITE" id="PS00119">
    <property type="entry name" value="PA2_ASP"/>
    <property type="match status" value="1"/>
</dbReference>
<dbReference type="PROSITE" id="PS00118">
    <property type="entry name" value="PA2_HIS"/>
    <property type="match status" value="1"/>
</dbReference>
<reference key="1">
    <citation type="journal article" date="1977" name="Biochim. Biophys. Acta">
        <title>Naja mossambica mossambica venom. Purification, some properties and the amino acid sequences of three phospholipases A (CM-I, CM-II and CM-III).</title>
        <authorList>
            <person name="Joubert F.J."/>
        </authorList>
    </citation>
    <scope>PROTEIN SEQUENCE</scope>
    <scope>TOXIC DOSE</scope>
    <source>
        <tissue>Venom</tissue>
    </source>
</reference>
<reference key="2">
    <citation type="journal article" date="1987" name="Proc. Natl. Sci. Counc. Repub. China, B, Life Sci.">
        <title>Pharmacological study on phospholipases A2 isolated from Naja mossambica mossambica venom.</title>
        <authorList>
            <person name="Lin W.W."/>
            <person name="Chang P.L."/>
            <person name="Lee C.Y."/>
            <person name="Joubert F.J."/>
        </authorList>
    </citation>
    <scope>FUNCTION</scope>
</reference>
<reference key="3">
    <citation type="journal article" date="2005" name="Toxicon">
        <title>Structure-function relationships and mechanism of anticoagulant phospholipase A2 enzymes from snake venoms.</title>
        <authorList>
            <person name="Kini R.M."/>
        </authorList>
    </citation>
    <scope>REVIEW</scope>
    <scope>FUNCTION</scope>
    <scope>MOTIF</scope>
</reference>
<feature type="chain" id="PRO_0000161668" description="Basic phospholipase A2 CM-III">
    <location>
        <begin position="1"/>
        <end position="118"/>
    </location>
</feature>
<feature type="short sequence motif" description="Coagulation factor Xa binding motif">
    <location>
        <begin position="52"/>
        <end position="69"/>
    </location>
</feature>
<feature type="active site" evidence="1">
    <location>
        <position position="47"/>
    </location>
</feature>
<feature type="active site" evidence="1">
    <location>
        <position position="92"/>
    </location>
</feature>
<feature type="binding site" evidence="1">
    <location>
        <position position="27"/>
    </location>
    <ligand>
        <name>Ca(2+)</name>
        <dbReference type="ChEBI" id="CHEBI:29108"/>
    </ligand>
</feature>
<feature type="binding site" evidence="1">
    <location>
        <position position="29"/>
    </location>
    <ligand>
        <name>Ca(2+)</name>
        <dbReference type="ChEBI" id="CHEBI:29108"/>
    </ligand>
</feature>
<feature type="binding site" evidence="1">
    <location>
        <position position="31"/>
    </location>
    <ligand>
        <name>Ca(2+)</name>
        <dbReference type="ChEBI" id="CHEBI:29108"/>
    </ligand>
</feature>
<feature type="binding site" evidence="1">
    <location>
        <position position="48"/>
    </location>
    <ligand>
        <name>Ca(2+)</name>
        <dbReference type="ChEBI" id="CHEBI:29108"/>
    </ligand>
</feature>
<feature type="disulfide bond" evidence="1">
    <location>
        <begin position="11"/>
        <end position="70"/>
    </location>
</feature>
<feature type="disulfide bond" evidence="1">
    <location>
        <begin position="26"/>
        <end position="117"/>
    </location>
</feature>
<feature type="disulfide bond" evidence="1">
    <location>
        <begin position="28"/>
        <end position="44"/>
    </location>
</feature>
<feature type="disulfide bond" evidence="1">
    <location>
        <begin position="43"/>
        <end position="98"/>
    </location>
</feature>
<feature type="disulfide bond" evidence="1">
    <location>
        <begin position="50"/>
        <end position="91"/>
    </location>
</feature>
<feature type="disulfide bond" evidence="1">
    <location>
        <begin position="59"/>
        <end position="84"/>
    </location>
</feature>
<feature type="disulfide bond" evidence="1">
    <location>
        <begin position="77"/>
        <end position="89"/>
    </location>
</feature>
<proteinExistence type="evidence at protein level"/>
<keyword id="KW-1203">Blood coagulation cascade inhibiting toxin</keyword>
<keyword id="KW-0106">Calcium</keyword>
<keyword id="KW-0204">Cytolysis</keyword>
<keyword id="KW-0903">Direct protein sequencing</keyword>
<keyword id="KW-1015">Disulfide bond</keyword>
<keyword id="KW-0354">Hemolysis</keyword>
<keyword id="KW-1199">Hemostasis impairing toxin</keyword>
<keyword id="KW-0378">Hydrolase</keyword>
<keyword id="KW-0442">Lipid degradation</keyword>
<keyword id="KW-0443">Lipid metabolism</keyword>
<keyword id="KW-0479">Metal-binding</keyword>
<keyword id="KW-0959">Myotoxin</keyword>
<keyword id="KW-0528">Neurotoxin</keyword>
<keyword id="KW-0964">Secreted</keyword>
<keyword id="KW-0800">Toxin</keyword>
<accession>P00604</accession>
<comment type="function">
    <text evidence="4 5">Snake venom phospholipase A2 (PLA2) that shows several activities. It shows strong anticoagulant activity, probably by binding to coagulation factor Xa (F10) and inhibiting the formation of the prothrombinase complex (PubMed:15922780), shows direct hemolytic action, causes neuromuscular blockade with a gradual contracture and a decreased sensitivity to ACh and KCl, abolishes twitches evoked by indirect stimulation earlier than those by direct stimulation (in the mouse phrenic nerve-diaphragm preparation), and causes myonecrosis when injected intramuscularly (PubMed:3615669). PLA2 catalyzes the calcium-dependent hydrolysis of the 2-acyl groups in 3-sn-phosphoglycerides.</text>
</comment>
<comment type="catalytic activity">
    <reaction evidence="2 3">
        <text>a 1,2-diacyl-sn-glycero-3-phosphocholine + H2O = a 1-acyl-sn-glycero-3-phosphocholine + a fatty acid + H(+)</text>
        <dbReference type="Rhea" id="RHEA:15801"/>
        <dbReference type="ChEBI" id="CHEBI:15377"/>
        <dbReference type="ChEBI" id="CHEBI:15378"/>
        <dbReference type="ChEBI" id="CHEBI:28868"/>
        <dbReference type="ChEBI" id="CHEBI:57643"/>
        <dbReference type="ChEBI" id="CHEBI:58168"/>
        <dbReference type="EC" id="3.1.1.4"/>
    </reaction>
</comment>
<comment type="cofactor">
    <cofactor evidence="1">
        <name>Ca(2+)</name>
        <dbReference type="ChEBI" id="CHEBI:29108"/>
    </cofactor>
    <text evidence="1">Binds 1 Ca(2+) ion.</text>
</comment>
<comment type="subcellular location">
    <subcellularLocation>
        <location>Secreted</location>
    </subcellularLocation>
</comment>
<comment type="tissue specificity">
    <text>Expressed by the venom gland.</text>
</comment>
<comment type="toxic dose">
    <text evidence="6">LD(50) is 0.3 mg/kg by injection into mice.</text>
</comment>
<comment type="similarity">
    <text evidence="7">Belongs to the phospholipase A2 family. Group I subfamily. D49 sub-subfamily.</text>
</comment>
<protein>
    <recommendedName>
        <fullName>Basic phospholipase A2 CM-III</fullName>
        <shortName>svPLA2</shortName>
        <ecNumber>3.1.1.4</ecNumber>
    </recommendedName>
    <alternativeName>
        <fullName>Phosphatidylcholine 2-acylhydrolase</fullName>
    </alternativeName>
</protein>